<gene>
    <name evidence="2" type="primary">tal</name>
    <name type="ordered locus">BB1445</name>
</gene>
<evidence type="ECO:0000250" key="1"/>
<evidence type="ECO:0000255" key="2">
    <source>
        <dbReference type="HAMAP-Rule" id="MF_00492"/>
    </source>
</evidence>
<evidence type="ECO:0000305" key="3"/>
<accession>Q7WME6</accession>
<proteinExistence type="inferred from homology"/>
<protein>
    <recommendedName>
        <fullName evidence="2">Transaldolase</fullName>
        <ecNumber evidence="2">2.2.1.2</ecNumber>
    </recommendedName>
</protein>
<keyword id="KW-0963">Cytoplasm</keyword>
<keyword id="KW-0570">Pentose shunt</keyword>
<keyword id="KW-0704">Schiff base</keyword>
<keyword id="KW-0808">Transferase</keyword>
<feature type="chain" id="PRO_0000173579" description="Transaldolase">
    <location>
        <begin position="1"/>
        <end position="320"/>
    </location>
</feature>
<feature type="active site" description="Schiff-base intermediate with substrate" evidence="2">
    <location>
        <position position="126"/>
    </location>
</feature>
<dbReference type="EC" id="2.2.1.2" evidence="2"/>
<dbReference type="EMBL" id="BX640441">
    <property type="protein sequence ID" value="CAE31943.1"/>
    <property type="status" value="ALT_INIT"/>
    <property type="molecule type" value="Genomic_DNA"/>
</dbReference>
<dbReference type="RefSeq" id="WP_010926156.1">
    <property type="nucleotide sequence ID" value="NC_002927.3"/>
</dbReference>
<dbReference type="SMR" id="Q7WME6"/>
<dbReference type="GeneID" id="93202985"/>
<dbReference type="KEGG" id="bbr:BB1445"/>
<dbReference type="eggNOG" id="COG0176">
    <property type="taxonomic scope" value="Bacteria"/>
</dbReference>
<dbReference type="HOGENOM" id="CLU_047470_0_1_4"/>
<dbReference type="UniPathway" id="UPA00115">
    <property type="reaction ID" value="UER00414"/>
</dbReference>
<dbReference type="Proteomes" id="UP000001027">
    <property type="component" value="Chromosome"/>
</dbReference>
<dbReference type="GO" id="GO:0005737">
    <property type="term" value="C:cytoplasm"/>
    <property type="evidence" value="ECO:0007669"/>
    <property type="project" value="UniProtKB-SubCell"/>
</dbReference>
<dbReference type="GO" id="GO:0004801">
    <property type="term" value="F:transaldolase activity"/>
    <property type="evidence" value="ECO:0000250"/>
    <property type="project" value="UniProtKB"/>
</dbReference>
<dbReference type="GO" id="GO:0005975">
    <property type="term" value="P:carbohydrate metabolic process"/>
    <property type="evidence" value="ECO:0007669"/>
    <property type="project" value="InterPro"/>
</dbReference>
<dbReference type="GO" id="GO:0006098">
    <property type="term" value="P:pentose-phosphate shunt"/>
    <property type="evidence" value="ECO:0007669"/>
    <property type="project" value="UniProtKB-UniRule"/>
</dbReference>
<dbReference type="CDD" id="cd00957">
    <property type="entry name" value="Transaldolase_TalAB"/>
    <property type="match status" value="1"/>
</dbReference>
<dbReference type="FunFam" id="3.20.20.70:FF:000131">
    <property type="entry name" value="Transaldolase"/>
    <property type="match status" value="1"/>
</dbReference>
<dbReference type="Gene3D" id="3.20.20.70">
    <property type="entry name" value="Aldolase class I"/>
    <property type="match status" value="1"/>
</dbReference>
<dbReference type="HAMAP" id="MF_00492">
    <property type="entry name" value="Transaldolase_1"/>
    <property type="match status" value="1"/>
</dbReference>
<dbReference type="InterPro" id="IPR013785">
    <property type="entry name" value="Aldolase_TIM"/>
</dbReference>
<dbReference type="InterPro" id="IPR001585">
    <property type="entry name" value="TAL/FSA"/>
</dbReference>
<dbReference type="InterPro" id="IPR004730">
    <property type="entry name" value="Transaldolase_1"/>
</dbReference>
<dbReference type="InterPro" id="IPR018225">
    <property type="entry name" value="Transaldolase_AS"/>
</dbReference>
<dbReference type="NCBIfam" id="TIGR00874">
    <property type="entry name" value="talAB"/>
    <property type="match status" value="1"/>
</dbReference>
<dbReference type="PANTHER" id="PTHR10683">
    <property type="entry name" value="TRANSALDOLASE"/>
    <property type="match status" value="1"/>
</dbReference>
<dbReference type="PANTHER" id="PTHR10683:SF18">
    <property type="entry name" value="TRANSALDOLASE"/>
    <property type="match status" value="1"/>
</dbReference>
<dbReference type="Pfam" id="PF00923">
    <property type="entry name" value="TAL_FSA"/>
    <property type="match status" value="1"/>
</dbReference>
<dbReference type="SUPFAM" id="SSF51569">
    <property type="entry name" value="Aldolase"/>
    <property type="match status" value="1"/>
</dbReference>
<dbReference type="PROSITE" id="PS01054">
    <property type="entry name" value="TRANSALDOLASE_1"/>
    <property type="match status" value="1"/>
</dbReference>
<dbReference type="PROSITE" id="PS00958">
    <property type="entry name" value="TRANSALDOLASE_2"/>
    <property type="match status" value="1"/>
</dbReference>
<organism>
    <name type="scientific">Bordetella bronchiseptica (strain ATCC BAA-588 / NCTC 13252 / RB50)</name>
    <name type="common">Alcaligenes bronchisepticus</name>
    <dbReference type="NCBI Taxonomy" id="257310"/>
    <lineage>
        <taxon>Bacteria</taxon>
        <taxon>Pseudomonadati</taxon>
        <taxon>Pseudomonadota</taxon>
        <taxon>Betaproteobacteria</taxon>
        <taxon>Burkholderiales</taxon>
        <taxon>Alcaligenaceae</taxon>
        <taxon>Bordetella</taxon>
    </lineage>
</organism>
<sequence>MPSQLEALRRHTVVVADTGDFEAMRALRPTDATTNPSLILKAVQQEAYRPLLVQTARAHQGASPAEITDRLLVAFGRQILDIVPGRVSTEVDARLSFDTRATVERARGLIALYQAAGVPRERVLIKIASTWEGIQAARVLQAEGIRCNLTLLFCLPQAAACADAGVQLISPFVGRIYDWHKKNAGAEWVEDARRGANDPGVQSVSRIYRYYKRFGIETEIMGASFRNVDQILALAGCDLLTISPELLTRLSQTEGEVPAALSPQAGHDDADAVRLDGGEVAFRTQLNEDAMASEKLSEGIRLFVADARKLDALIESHGAA</sequence>
<name>TAL_BORBR</name>
<comment type="function">
    <text evidence="2">Transaldolase is important for the balance of metabolites in the pentose-phosphate pathway.</text>
</comment>
<comment type="catalytic activity">
    <reaction evidence="2">
        <text>D-sedoheptulose 7-phosphate + D-glyceraldehyde 3-phosphate = D-erythrose 4-phosphate + beta-D-fructose 6-phosphate</text>
        <dbReference type="Rhea" id="RHEA:17053"/>
        <dbReference type="ChEBI" id="CHEBI:16897"/>
        <dbReference type="ChEBI" id="CHEBI:57483"/>
        <dbReference type="ChEBI" id="CHEBI:57634"/>
        <dbReference type="ChEBI" id="CHEBI:59776"/>
        <dbReference type="EC" id="2.2.1.2"/>
    </reaction>
</comment>
<comment type="pathway">
    <text evidence="2">Carbohydrate degradation; pentose phosphate pathway; D-glyceraldehyde 3-phosphate and beta-D-fructose 6-phosphate from D-ribose 5-phosphate and D-xylulose 5-phosphate (non-oxidative stage): step 2/3.</text>
</comment>
<comment type="subunit">
    <text evidence="1">Homodimer.</text>
</comment>
<comment type="subcellular location">
    <subcellularLocation>
        <location evidence="2">Cytoplasm</location>
    </subcellularLocation>
</comment>
<comment type="similarity">
    <text evidence="2">Belongs to the transaldolase family. Type 1 subfamily.</text>
</comment>
<comment type="sequence caution" evidence="3">
    <conflict type="erroneous initiation">
        <sequence resource="EMBL-CDS" id="CAE31943"/>
    </conflict>
    <text>Extended N-terminus.</text>
</comment>
<reference key="1">
    <citation type="journal article" date="2003" name="Nat. Genet.">
        <title>Comparative analysis of the genome sequences of Bordetella pertussis, Bordetella parapertussis and Bordetella bronchiseptica.</title>
        <authorList>
            <person name="Parkhill J."/>
            <person name="Sebaihia M."/>
            <person name="Preston A."/>
            <person name="Murphy L.D."/>
            <person name="Thomson N.R."/>
            <person name="Harris D.E."/>
            <person name="Holden M.T.G."/>
            <person name="Churcher C.M."/>
            <person name="Bentley S.D."/>
            <person name="Mungall K.L."/>
            <person name="Cerdeno-Tarraga A.-M."/>
            <person name="Temple L."/>
            <person name="James K.D."/>
            <person name="Harris B."/>
            <person name="Quail M.A."/>
            <person name="Achtman M."/>
            <person name="Atkin R."/>
            <person name="Baker S."/>
            <person name="Basham D."/>
            <person name="Bason N."/>
            <person name="Cherevach I."/>
            <person name="Chillingworth T."/>
            <person name="Collins M."/>
            <person name="Cronin A."/>
            <person name="Davis P."/>
            <person name="Doggett J."/>
            <person name="Feltwell T."/>
            <person name="Goble A."/>
            <person name="Hamlin N."/>
            <person name="Hauser H."/>
            <person name="Holroyd S."/>
            <person name="Jagels K."/>
            <person name="Leather S."/>
            <person name="Moule S."/>
            <person name="Norberczak H."/>
            <person name="O'Neil S."/>
            <person name="Ormond D."/>
            <person name="Price C."/>
            <person name="Rabbinowitsch E."/>
            <person name="Rutter S."/>
            <person name="Sanders M."/>
            <person name="Saunders D."/>
            <person name="Seeger K."/>
            <person name="Sharp S."/>
            <person name="Simmonds M."/>
            <person name="Skelton J."/>
            <person name="Squares R."/>
            <person name="Squares S."/>
            <person name="Stevens K."/>
            <person name="Unwin L."/>
            <person name="Whitehead S."/>
            <person name="Barrell B.G."/>
            <person name="Maskell D.J."/>
        </authorList>
    </citation>
    <scope>NUCLEOTIDE SEQUENCE [LARGE SCALE GENOMIC DNA]</scope>
    <source>
        <strain>ATCC BAA-588 / NCTC 13252 / RB50</strain>
    </source>
</reference>